<feature type="chain" id="PRO_0000374763" description="Ribosomal protein uS12 methylthiotransferase RimO">
    <location>
        <begin position="1"/>
        <end position="460"/>
    </location>
</feature>
<feature type="domain" description="MTTase N-terminal" evidence="1">
    <location>
        <begin position="16"/>
        <end position="130"/>
    </location>
</feature>
<feature type="domain" description="Radical SAM core" evidence="2">
    <location>
        <begin position="150"/>
        <end position="382"/>
    </location>
</feature>
<feature type="domain" description="TRAM" evidence="1">
    <location>
        <begin position="385"/>
        <end position="455"/>
    </location>
</feature>
<feature type="binding site" evidence="1">
    <location>
        <position position="25"/>
    </location>
    <ligand>
        <name>[4Fe-4S] cluster</name>
        <dbReference type="ChEBI" id="CHEBI:49883"/>
        <label>1</label>
    </ligand>
</feature>
<feature type="binding site" evidence="1">
    <location>
        <position position="61"/>
    </location>
    <ligand>
        <name>[4Fe-4S] cluster</name>
        <dbReference type="ChEBI" id="CHEBI:49883"/>
        <label>1</label>
    </ligand>
</feature>
<feature type="binding site" evidence="1">
    <location>
        <position position="93"/>
    </location>
    <ligand>
        <name>[4Fe-4S] cluster</name>
        <dbReference type="ChEBI" id="CHEBI:49883"/>
        <label>1</label>
    </ligand>
</feature>
<feature type="binding site" evidence="1">
    <location>
        <position position="164"/>
    </location>
    <ligand>
        <name>[4Fe-4S] cluster</name>
        <dbReference type="ChEBI" id="CHEBI:49883"/>
        <label>2</label>
        <note>4Fe-4S-S-AdoMet</note>
    </ligand>
</feature>
<feature type="binding site" evidence="1">
    <location>
        <position position="168"/>
    </location>
    <ligand>
        <name>[4Fe-4S] cluster</name>
        <dbReference type="ChEBI" id="CHEBI:49883"/>
        <label>2</label>
        <note>4Fe-4S-S-AdoMet</note>
    </ligand>
</feature>
<feature type="binding site" evidence="1">
    <location>
        <position position="171"/>
    </location>
    <ligand>
        <name>[4Fe-4S] cluster</name>
        <dbReference type="ChEBI" id="CHEBI:49883"/>
        <label>2</label>
        <note>4Fe-4S-S-AdoMet</note>
    </ligand>
</feature>
<name>RIMO_CHLFF</name>
<proteinExistence type="inferred from homology"/>
<dbReference type="EC" id="2.8.4.4" evidence="1"/>
<dbReference type="EMBL" id="AP006861">
    <property type="protein sequence ID" value="BAE81254.1"/>
    <property type="molecule type" value="Genomic_DNA"/>
</dbReference>
<dbReference type="RefSeq" id="WP_011458034.1">
    <property type="nucleotide sequence ID" value="NC_007899.1"/>
</dbReference>
<dbReference type="SMR" id="Q254N4"/>
<dbReference type="STRING" id="264202.gene:10544303"/>
<dbReference type="KEGG" id="cfe:BAE81254.1"/>
<dbReference type="eggNOG" id="COG0621">
    <property type="taxonomic scope" value="Bacteria"/>
</dbReference>
<dbReference type="HOGENOM" id="CLU_018697_0_1_0"/>
<dbReference type="OrthoDB" id="9805215at2"/>
<dbReference type="Proteomes" id="UP000001260">
    <property type="component" value="Chromosome"/>
</dbReference>
<dbReference type="GO" id="GO:0005829">
    <property type="term" value="C:cytosol"/>
    <property type="evidence" value="ECO:0007669"/>
    <property type="project" value="TreeGrafter"/>
</dbReference>
<dbReference type="GO" id="GO:0051539">
    <property type="term" value="F:4 iron, 4 sulfur cluster binding"/>
    <property type="evidence" value="ECO:0007669"/>
    <property type="project" value="UniProtKB-UniRule"/>
</dbReference>
<dbReference type="GO" id="GO:0035599">
    <property type="term" value="F:aspartic acid methylthiotransferase activity"/>
    <property type="evidence" value="ECO:0007669"/>
    <property type="project" value="TreeGrafter"/>
</dbReference>
<dbReference type="GO" id="GO:0046872">
    <property type="term" value="F:metal ion binding"/>
    <property type="evidence" value="ECO:0007669"/>
    <property type="project" value="UniProtKB-KW"/>
</dbReference>
<dbReference type="GO" id="GO:0103039">
    <property type="term" value="F:protein methylthiotransferase activity"/>
    <property type="evidence" value="ECO:0007669"/>
    <property type="project" value="UniProtKB-EC"/>
</dbReference>
<dbReference type="GO" id="GO:0006400">
    <property type="term" value="P:tRNA modification"/>
    <property type="evidence" value="ECO:0007669"/>
    <property type="project" value="InterPro"/>
</dbReference>
<dbReference type="CDD" id="cd01335">
    <property type="entry name" value="Radical_SAM"/>
    <property type="match status" value="1"/>
</dbReference>
<dbReference type="FunFam" id="3.40.50.12160:FF:000003">
    <property type="entry name" value="CDK5 regulatory subunit-associated protein 1"/>
    <property type="match status" value="1"/>
</dbReference>
<dbReference type="FunFam" id="3.80.30.20:FF:000001">
    <property type="entry name" value="tRNA-2-methylthio-N(6)-dimethylallyladenosine synthase 2"/>
    <property type="match status" value="1"/>
</dbReference>
<dbReference type="Gene3D" id="3.40.50.12160">
    <property type="entry name" value="Methylthiotransferase, N-terminal domain"/>
    <property type="match status" value="1"/>
</dbReference>
<dbReference type="Gene3D" id="2.40.50.140">
    <property type="entry name" value="Nucleic acid-binding proteins"/>
    <property type="match status" value="1"/>
</dbReference>
<dbReference type="Gene3D" id="3.80.30.20">
    <property type="entry name" value="tm_1862 like domain"/>
    <property type="match status" value="1"/>
</dbReference>
<dbReference type="HAMAP" id="MF_01865">
    <property type="entry name" value="MTTase_RimO"/>
    <property type="match status" value="1"/>
</dbReference>
<dbReference type="InterPro" id="IPR006638">
    <property type="entry name" value="Elp3/MiaA/NifB-like_rSAM"/>
</dbReference>
<dbReference type="InterPro" id="IPR005839">
    <property type="entry name" value="Methylthiotransferase"/>
</dbReference>
<dbReference type="InterPro" id="IPR020612">
    <property type="entry name" value="Methylthiotransferase_CS"/>
</dbReference>
<dbReference type="InterPro" id="IPR013848">
    <property type="entry name" value="Methylthiotransferase_N"/>
</dbReference>
<dbReference type="InterPro" id="IPR038135">
    <property type="entry name" value="Methylthiotransferase_N_sf"/>
</dbReference>
<dbReference type="InterPro" id="IPR012340">
    <property type="entry name" value="NA-bd_OB-fold"/>
</dbReference>
<dbReference type="InterPro" id="IPR005840">
    <property type="entry name" value="Ribosomal_uS12_MeSTrfase_RimO"/>
</dbReference>
<dbReference type="InterPro" id="IPR007197">
    <property type="entry name" value="rSAM"/>
</dbReference>
<dbReference type="InterPro" id="IPR023404">
    <property type="entry name" value="rSAM_horseshoe"/>
</dbReference>
<dbReference type="InterPro" id="IPR002792">
    <property type="entry name" value="TRAM_dom"/>
</dbReference>
<dbReference type="NCBIfam" id="TIGR01125">
    <property type="entry name" value="30S ribosomal protein S12 methylthiotransferase RimO"/>
    <property type="match status" value="1"/>
</dbReference>
<dbReference type="NCBIfam" id="TIGR00089">
    <property type="entry name" value="MiaB/RimO family radical SAM methylthiotransferase"/>
    <property type="match status" value="1"/>
</dbReference>
<dbReference type="PANTHER" id="PTHR43837">
    <property type="entry name" value="RIBOSOMAL PROTEIN S12 METHYLTHIOTRANSFERASE RIMO"/>
    <property type="match status" value="1"/>
</dbReference>
<dbReference type="PANTHER" id="PTHR43837:SF1">
    <property type="entry name" value="RIBOSOMAL PROTEIN US12 METHYLTHIOTRANSFERASE RIMO"/>
    <property type="match status" value="1"/>
</dbReference>
<dbReference type="Pfam" id="PF04055">
    <property type="entry name" value="Radical_SAM"/>
    <property type="match status" value="1"/>
</dbReference>
<dbReference type="Pfam" id="PF18693">
    <property type="entry name" value="TRAM_2"/>
    <property type="match status" value="1"/>
</dbReference>
<dbReference type="Pfam" id="PF00919">
    <property type="entry name" value="UPF0004"/>
    <property type="match status" value="1"/>
</dbReference>
<dbReference type="SFLD" id="SFLDG01082">
    <property type="entry name" value="B12-binding_domain_containing"/>
    <property type="match status" value="1"/>
</dbReference>
<dbReference type="SFLD" id="SFLDS00029">
    <property type="entry name" value="Radical_SAM"/>
    <property type="match status" value="1"/>
</dbReference>
<dbReference type="SFLD" id="SFLDF00274">
    <property type="entry name" value="ribosomal_protein_S12_methylth"/>
    <property type="match status" value="1"/>
</dbReference>
<dbReference type="SMART" id="SM00729">
    <property type="entry name" value="Elp3"/>
    <property type="match status" value="1"/>
</dbReference>
<dbReference type="SUPFAM" id="SSF102114">
    <property type="entry name" value="Radical SAM enzymes"/>
    <property type="match status" value="1"/>
</dbReference>
<dbReference type="PROSITE" id="PS51449">
    <property type="entry name" value="MTTASE_N"/>
    <property type="match status" value="1"/>
</dbReference>
<dbReference type="PROSITE" id="PS01278">
    <property type="entry name" value="MTTASE_RADICAL"/>
    <property type="match status" value="1"/>
</dbReference>
<dbReference type="PROSITE" id="PS51918">
    <property type="entry name" value="RADICAL_SAM"/>
    <property type="match status" value="1"/>
</dbReference>
<gene>
    <name evidence="1" type="primary">rimO</name>
    <name type="ordered locus">CF0482</name>
</gene>
<accession>Q254N4</accession>
<protein>
    <recommendedName>
        <fullName evidence="1">Ribosomal protein uS12 methylthiotransferase RimO</fullName>
        <shortName evidence="1">uS12 MTTase</shortName>
        <shortName evidence="1">uS12 methylthiotransferase</shortName>
        <ecNumber evidence="1">2.8.4.4</ecNumber>
    </recommendedName>
    <alternativeName>
        <fullName evidence="1">Ribosomal protein uS12 (aspartate-C(3))-methylthiotransferase</fullName>
    </alternativeName>
    <alternativeName>
        <fullName evidence="1">Ribosome maturation factor RimO</fullName>
    </alternativeName>
</protein>
<reference key="1">
    <citation type="journal article" date="2006" name="DNA Res.">
        <title>Genome sequence of the cat pathogen, Chlamydophila felis.</title>
        <authorList>
            <person name="Azuma Y."/>
            <person name="Hirakawa H."/>
            <person name="Yamashita A."/>
            <person name="Cai Y."/>
            <person name="Rahman M.A."/>
            <person name="Suzuki H."/>
            <person name="Mitaku S."/>
            <person name="Toh H."/>
            <person name="Goto S."/>
            <person name="Murakami T."/>
            <person name="Sugi K."/>
            <person name="Hayashi H."/>
            <person name="Fukushi H."/>
            <person name="Hattori M."/>
            <person name="Kuhara S."/>
            <person name="Shirai M."/>
        </authorList>
    </citation>
    <scope>NUCLEOTIDE SEQUENCE [LARGE SCALE GENOMIC DNA]</scope>
    <source>
        <strain>Fe/C-56</strain>
    </source>
</reference>
<comment type="function">
    <text evidence="1">Catalyzes the methylthiolation of an aspartic acid residue of ribosomal protein uS12.</text>
</comment>
<comment type="catalytic activity">
    <reaction evidence="1">
        <text>L-aspartate(89)-[ribosomal protein uS12]-hydrogen + (sulfur carrier)-SH + AH2 + 2 S-adenosyl-L-methionine = 3-methylsulfanyl-L-aspartate(89)-[ribosomal protein uS12]-hydrogen + (sulfur carrier)-H + 5'-deoxyadenosine + L-methionine + A + S-adenosyl-L-homocysteine + 2 H(+)</text>
        <dbReference type="Rhea" id="RHEA:37087"/>
        <dbReference type="Rhea" id="RHEA-COMP:10460"/>
        <dbReference type="Rhea" id="RHEA-COMP:10461"/>
        <dbReference type="Rhea" id="RHEA-COMP:14737"/>
        <dbReference type="Rhea" id="RHEA-COMP:14739"/>
        <dbReference type="ChEBI" id="CHEBI:13193"/>
        <dbReference type="ChEBI" id="CHEBI:15378"/>
        <dbReference type="ChEBI" id="CHEBI:17319"/>
        <dbReference type="ChEBI" id="CHEBI:17499"/>
        <dbReference type="ChEBI" id="CHEBI:29917"/>
        <dbReference type="ChEBI" id="CHEBI:29961"/>
        <dbReference type="ChEBI" id="CHEBI:57844"/>
        <dbReference type="ChEBI" id="CHEBI:57856"/>
        <dbReference type="ChEBI" id="CHEBI:59789"/>
        <dbReference type="ChEBI" id="CHEBI:64428"/>
        <dbReference type="ChEBI" id="CHEBI:73599"/>
        <dbReference type="EC" id="2.8.4.4"/>
    </reaction>
</comment>
<comment type="cofactor">
    <cofactor evidence="1">
        <name>[4Fe-4S] cluster</name>
        <dbReference type="ChEBI" id="CHEBI:49883"/>
    </cofactor>
    <text evidence="1">Binds 2 [4Fe-4S] clusters. One cluster is coordinated with 3 cysteines and an exchangeable S-adenosyl-L-methionine.</text>
</comment>
<comment type="subcellular location">
    <subcellularLocation>
        <location evidence="1">Cytoplasm</location>
    </subcellularLocation>
</comment>
<comment type="similarity">
    <text evidence="1">Belongs to the methylthiotransferase family. RimO subfamily.</text>
</comment>
<organism>
    <name type="scientific">Chlamydia felis (strain Fe/C-56)</name>
    <name type="common">Chlamydophila felis</name>
    <dbReference type="NCBI Taxonomy" id="264202"/>
    <lineage>
        <taxon>Bacteria</taxon>
        <taxon>Pseudomonadati</taxon>
        <taxon>Chlamydiota</taxon>
        <taxon>Chlamydiia</taxon>
        <taxon>Chlamydiales</taxon>
        <taxon>Chlamydiaceae</taxon>
        <taxon>Chlamydia/Chlamydophila group</taxon>
        <taxon>Chlamydia</taxon>
    </lineage>
</organism>
<evidence type="ECO:0000255" key="1">
    <source>
        <dbReference type="HAMAP-Rule" id="MF_01865"/>
    </source>
</evidence>
<evidence type="ECO:0000255" key="2">
    <source>
        <dbReference type="PROSITE-ProRule" id="PRU01266"/>
    </source>
</evidence>
<sequence>MKIKEQFFFKQEASKNKIHFISLGCSRNLVDTEVMLGILLKSGYEATESLEEADYLILNTCAFLKAARDESTDYLQRIIKAKKETAKIILTGCMVSKHKEELKPLLPHIHYVLGSGDVEHILSAIESKEYGEKISSKSYLEMGEIPRKLSTPKHYAYLKIAEGCRKRCAFCIIPTIKGALRSKPLDQIIKEFRLLLKMGVKEIILIAQDLGDYGKDFSADRKSCLDKVLKEMLKEPGDYWIRMLYLYPDEVDDTIIDLMESDHRLLPYVDIPLQHINNRVLKKMLRTTSKEQILDLLTKLRTRIPHIYIRSSFIVGFPGETDDEFQDLVDFVREGWIDNLGIFSYSQEEGSVAADMPDQVSQSVKSKRLKILSQAQKQNVEKHNQKLVGQVVEAVIDGYHPDSELLLTARFYGQAPEVDPCIIVNEARLVSGFGERYLIEITGYVGYDLIGRVVKKAPGE</sequence>
<keyword id="KW-0004">4Fe-4S</keyword>
<keyword id="KW-0963">Cytoplasm</keyword>
<keyword id="KW-0408">Iron</keyword>
<keyword id="KW-0411">Iron-sulfur</keyword>
<keyword id="KW-0479">Metal-binding</keyword>
<keyword id="KW-0949">S-adenosyl-L-methionine</keyword>
<keyword id="KW-0808">Transferase</keyword>